<feature type="chain" id="PRO_1000058989" description="Probable nicotinate-nucleotide adenylyltransferase">
    <location>
        <begin position="1"/>
        <end position="189"/>
    </location>
</feature>
<name>NADD_BACP2</name>
<gene>
    <name evidence="1" type="primary">nadD</name>
    <name type="ordered locus">BPUM_2298</name>
</gene>
<comment type="function">
    <text evidence="1">Catalyzes the reversible adenylation of nicotinate mononucleotide (NaMN) to nicotinic acid adenine dinucleotide (NaAD).</text>
</comment>
<comment type="catalytic activity">
    <reaction evidence="1">
        <text>nicotinate beta-D-ribonucleotide + ATP + H(+) = deamido-NAD(+) + diphosphate</text>
        <dbReference type="Rhea" id="RHEA:22860"/>
        <dbReference type="ChEBI" id="CHEBI:15378"/>
        <dbReference type="ChEBI" id="CHEBI:30616"/>
        <dbReference type="ChEBI" id="CHEBI:33019"/>
        <dbReference type="ChEBI" id="CHEBI:57502"/>
        <dbReference type="ChEBI" id="CHEBI:58437"/>
        <dbReference type="EC" id="2.7.7.18"/>
    </reaction>
</comment>
<comment type="pathway">
    <text evidence="1">Cofactor biosynthesis; NAD(+) biosynthesis; deamido-NAD(+) from nicotinate D-ribonucleotide: step 1/1.</text>
</comment>
<comment type="similarity">
    <text evidence="1">Belongs to the NadD family.</text>
</comment>
<proteinExistence type="inferred from homology"/>
<reference key="1">
    <citation type="journal article" date="2007" name="PLoS ONE">
        <title>Paradoxical DNA repair and peroxide resistance gene conservation in Bacillus pumilus SAFR-032.</title>
        <authorList>
            <person name="Gioia J."/>
            <person name="Yerrapragada S."/>
            <person name="Qin X."/>
            <person name="Jiang H."/>
            <person name="Igboeli O.C."/>
            <person name="Muzny D."/>
            <person name="Dugan-Rocha S."/>
            <person name="Ding Y."/>
            <person name="Hawes A."/>
            <person name="Liu W."/>
            <person name="Perez L."/>
            <person name="Kovar C."/>
            <person name="Dinh H."/>
            <person name="Lee S."/>
            <person name="Nazareth L."/>
            <person name="Blyth P."/>
            <person name="Holder M."/>
            <person name="Buhay C."/>
            <person name="Tirumalai M.R."/>
            <person name="Liu Y."/>
            <person name="Dasgupta I."/>
            <person name="Bokhetache L."/>
            <person name="Fujita M."/>
            <person name="Karouia F."/>
            <person name="Eswara Moorthy P."/>
            <person name="Siefert J."/>
            <person name="Uzman A."/>
            <person name="Buzumbo P."/>
            <person name="Verma A."/>
            <person name="Zwiya H."/>
            <person name="McWilliams B.D."/>
            <person name="Olowu A."/>
            <person name="Clinkenbeard K.D."/>
            <person name="Newcombe D."/>
            <person name="Golebiewski L."/>
            <person name="Petrosino J.F."/>
            <person name="Nicholson W.L."/>
            <person name="Fox G.E."/>
            <person name="Venkateswaran K."/>
            <person name="Highlander S.K."/>
            <person name="Weinstock G.M."/>
        </authorList>
    </citation>
    <scope>NUCLEOTIDE SEQUENCE [LARGE SCALE GENOMIC DNA]</scope>
    <source>
        <strain>SAFR-032</strain>
    </source>
</reference>
<sequence>MKKIGLFGGTFDPPHNGHLLMANEVRFQVGLDEIWFIPNHKPPHKTDRKRADSRHRVKMVEAAIESNPHFRLELIEMEREGPSYTVDTVELLKKRHPEDEFFFMIGADMVEYLPKWHRIDDLLQMITFIGMKRPGYTGSTTYSLLFADVPAFDVSSTLIRQRIMQEKPVDYLLPKAVERYIKEHHLYES</sequence>
<keyword id="KW-0067">ATP-binding</keyword>
<keyword id="KW-0520">NAD</keyword>
<keyword id="KW-0547">Nucleotide-binding</keyword>
<keyword id="KW-0548">Nucleotidyltransferase</keyword>
<keyword id="KW-0662">Pyridine nucleotide biosynthesis</keyword>
<keyword id="KW-0808">Transferase</keyword>
<organism>
    <name type="scientific">Bacillus pumilus (strain SAFR-032)</name>
    <dbReference type="NCBI Taxonomy" id="315750"/>
    <lineage>
        <taxon>Bacteria</taxon>
        <taxon>Bacillati</taxon>
        <taxon>Bacillota</taxon>
        <taxon>Bacilli</taxon>
        <taxon>Bacillales</taxon>
        <taxon>Bacillaceae</taxon>
        <taxon>Bacillus</taxon>
    </lineage>
</organism>
<protein>
    <recommendedName>
        <fullName evidence="1">Probable nicotinate-nucleotide adenylyltransferase</fullName>
        <ecNumber evidence="1">2.7.7.18</ecNumber>
    </recommendedName>
    <alternativeName>
        <fullName evidence="1">Deamido-NAD(+) diphosphorylase</fullName>
    </alternativeName>
    <alternativeName>
        <fullName evidence="1">Deamido-NAD(+) pyrophosphorylase</fullName>
    </alternativeName>
    <alternativeName>
        <fullName evidence="1">Nicotinate mononucleotide adenylyltransferase</fullName>
        <shortName evidence="1">NaMN adenylyltransferase</shortName>
    </alternativeName>
</protein>
<dbReference type="EC" id="2.7.7.18" evidence="1"/>
<dbReference type="EMBL" id="CP000813">
    <property type="protein sequence ID" value="ABV62967.1"/>
    <property type="molecule type" value="Genomic_DNA"/>
</dbReference>
<dbReference type="RefSeq" id="WP_012010645.1">
    <property type="nucleotide sequence ID" value="NZ_VEIS01000005.1"/>
</dbReference>
<dbReference type="SMR" id="A8FFF0"/>
<dbReference type="STRING" id="315750.BPUM_2298"/>
<dbReference type="GeneID" id="5621563"/>
<dbReference type="KEGG" id="bpu:BPUM_2298"/>
<dbReference type="eggNOG" id="COG1057">
    <property type="taxonomic scope" value="Bacteria"/>
</dbReference>
<dbReference type="HOGENOM" id="CLU_069765_3_1_9"/>
<dbReference type="OrthoDB" id="5295945at2"/>
<dbReference type="UniPathway" id="UPA00253">
    <property type="reaction ID" value="UER00332"/>
</dbReference>
<dbReference type="Proteomes" id="UP000001355">
    <property type="component" value="Chromosome"/>
</dbReference>
<dbReference type="GO" id="GO:0005524">
    <property type="term" value="F:ATP binding"/>
    <property type="evidence" value="ECO:0007669"/>
    <property type="project" value="UniProtKB-KW"/>
</dbReference>
<dbReference type="GO" id="GO:0004515">
    <property type="term" value="F:nicotinate-nucleotide adenylyltransferase activity"/>
    <property type="evidence" value="ECO:0007669"/>
    <property type="project" value="UniProtKB-UniRule"/>
</dbReference>
<dbReference type="GO" id="GO:0009435">
    <property type="term" value="P:NAD biosynthetic process"/>
    <property type="evidence" value="ECO:0007669"/>
    <property type="project" value="UniProtKB-UniRule"/>
</dbReference>
<dbReference type="CDD" id="cd02165">
    <property type="entry name" value="NMNAT"/>
    <property type="match status" value="1"/>
</dbReference>
<dbReference type="FunFam" id="3.40.50.620:FF:000079">
    <property type="entry name" value="Probable nicotinate-nucleotide adenylyltransferase"/>
    <property type="match status" value="1"/>
</dbReference>
<dbReference type="Gene3D" id="3.40.50.620">
    <property type="entry name" value="HUPs"/>
    <property type="match status" value="1"/>
</dbReference>
<dbReference type="HAMAP" id="MF_00244">
    <property type="entry name" value="NaMN_adenylyltr"/>
    <property type="match status" value="1"/>
</dbReference>
<dbReference type="InterPro" id="IPR004821">
    <property type="entry name" value="Cyt_trans-like"/>
</dbReference>
<dbReference type="InterPro" id="IPR005248">
    <property type="entry name" value="NadD/NMNAT"/>
</dbReference>
<dbReference type="InterPro" id="IPR014729">
    <property type="entry name" value="Rossmann-like_a/b/a_fold"/>
</dbReference>
<dbReference type="NCBIfam" id="TIGR00125">
    <property type="entry name" value="cyt_tran_rel"/>
    <property type="match status" value="1"/>
</dbReference>
<dbReference type="NCBIfam" id="TIGR00482">
    <property type="entry name" value="nicotinate (nicotinamide) nucleotide adenylyltransferase"/>
    <property type="match status" value="1"/>
</dbReference>
<dbReference type="NCBIfam" id="NF000840">
    <property type="entry name" value="PRK00071.1-3"/>
    <property type="match status" value="1"/>
</dbReference>
<dbReference type="NCBIfam" id="NF000841">
    <property type="entry name" value="PRK00071.1-4"/>
    <property type="match status" value="1"/>
</dbReference>
<dbReference type="PANTHER" id="PTHR39321">
    <property type="entry name" value="NICOTINATE-NUCLEOTIDE ADENYLYLTRANSFERASE-RELATED"/>
    <property type="match status" value="1"/>
</dbReference>
<dbReference type="PANTHER" id="PTHR39321:SF3">
    <property type="entry name" value="PHOSPHOPANTETHEINE ADENYLYLTRANSFERASE"/>
    <property type="match status" value="1"/>
</dbReference>
<dbReference type="Pfam" id="PF01467">
    <property type="entry name" value="CTP_transf_like"/>
    <property type="match status" value="1"/>
</dbReference>
<dbReference type="SUPFAM" id="SSF52374">
    <property type="entry name" value="Nucleotidylyl transferase"/>
    <property type="match status" value="1"/>
</dbReference>
<evidence type="ECO:0000255" key="1">
    <source>
        <dbReference type="HAMAP-Rule" id="MF_00244"/>
    </source>
</evidence>
<accession>A8FFF0</accession>